<proteinExistence type="inferred from homology"/>
<keyword id="KW-0997">Cell inner membrane</keyword>
<keyword id="KW-1003">Cell membrane</keyword>
<keyword id="KW-0342">GTP-binding</keyword>
<keyword id="KW-0378">Hydrolase</keyword>
<keyword id="KW-0472">Membrane</keyword>
<keyword id="KW-0547">Nucleotide-binding</keyword>
<keyword id="KW-0648">Protein biosynthesis</keyword>
<keyword id="KW-1185">Reference proteome</keyword>
<name>LEPA_DESPS</name>
<gene>
    <name evidence="1" type="primary">lepA</name>
    <name type="ordered locus">DP2193</name>
</gene>
<dbReference type="EC" id="3.6.5.n1" evidence="1"/>
<dbReference type="EMBL" id="CR522870">
    <property type="protein sequence ID" value="CAG36922.1"/>
    <property type="molecule type" value="Genomic_DNA"/>
</dbReference>
<dbReference type="RefSeq" id="WP_011189434.1">
    <property type="nucleotide sequence ID" value="NC_006138.1"/>
</dbReference>
<dbReference type="SMR" id="Q6AL53"/>
<dbReference type="STRING" id="177439.DP2193"/>
<dbReference type="KEGG" id="dps:DP2193"/>
<dbReference type="eggNOG" id="COG0481">
    <property type="taxonomic scope" value="Bacteria"/>
</dbReference>
<dbReference type="HOGENOM" id="CLU_009995_3_3_7"/>
<dbReference type="OrthoDB" id="9760518at2"/>
<dbReference type="Proteomes" id="UP000000602">
    <property type="component" value="Chromosome"/>
</dbReference>
<dbReference type="GO" id="GO:0005886">
    <property type="term" value="C:plasma membrane"/>
    <property type="evidence" value="ECO:0007669"/>
    <property type="project" value="UniProtKB-SubCell"/>
</dbReference>
<dbReference type="GO" id="GO:0005525">
    <property type="term" value="F:GTP binding"/>
    <property type="evidence" value="ECO:0007669"/>
    <property type="project" value="UniProtKB-UniRule"/>
</dbReference>
<dbReference type="GO" id="GO:0003924">
    <property type="term" value="F:GTPase activity"/>
    <property type="evidence" value="ECO:0007669"/>
    <property type="project" value="UniProtKB-UniRule"/>
</dbReference>
<dbReference type="GO" id="GO:0043022">
    <property type="term" value="F:ribosome binding"/>
    <property type="evidence" value="ECO:0007669"/>
    <property type="project" value="UniProtKB-UniRule"/>
</dbReference>
<dbReference type="GO" id="GO:0003746">
    <property type="term" value="F:translation elongation factor activity"/>
    <property type="evidence" value="ECO:0007669"/>
    <property type="project" value="UniProtKB-UniRule"/>
</dbReference>
<dbReference type="GO" id="GO:0045727">
    <property type="term" value="P:positive regulation of translation"/>
    <property type="evidence" value="ECO:0007669"/>
    <property type="project" value="UniProtKB-UniRule"/>
</dbReference>
<dbReference type="CDD" id="cd03699">
    <property type="entry name" value="EF4_II"/>
    <property type="match status" value="1"/>
</dbReference>
<dbReference type="CDD" id="cd16260">
    <property type="entry name" value="EF4_III"/>
    <property type="match status" value="1"/>
</dbReference>
<dbReference type="CDD" id="cd01890">
    <property type="entry name" value="LepA"/>
    <property type="match status" value="1"/>
</dbReference>
<dbReference type="CDD" id="cd03709">
    <property type="entry name" value="lepA_C"/>
    <property type="match status" value="1"/>
</dbReference>
<dbReference type="FunFam" id="3.40.50.300:FF:000078">
    <property type="entry name" value="Elongation factor 4"/>
    <property type="match status" value="1"/>
</dbReference>
<dbReference type="FunFam" id="2.40.30.10:FF:000015">
    <property type="entry name" value="Translation factor GUF1, mitochondrial"/>
    <property type="match status" value="1"/>
</dbReference>
<dbReference type="FunFam" id="3.30.70.240:FF:000007">
    <property type="entry name" value="Translation factor GUF1, mitochondrial"/>
    <property type="match status" value="1"/>
</dbReference>
<dbReference type="FunFam" id="3.30.70.2570:FF:000001">
    <property type="entry name" value="Translation factor GUF1, mitochondrial"/>
    <property type="match status" value="1"/>
</dbReference>
<dbReference type="FunFam" id="3.30.70.870:FF:000004">
    <property type="entry name" value="Translation factor GUF1, mitochondrial"/>
    <property type="match status" value="1"/>
</dbReference>
<dbReference type="Gene3D" id="3.30.70.240">
    <property type="match status" value="1"/>
</dbReference>
<dbReference type="Gene3D" id="3.30.70.2570">
    <property type="entry name" value="Elongation factor 4, C-terminal domain"/>
    <property type="match status" value="1"/>
</dbReference>
<dbReference type="Gene3D" id="3.30.70.870">
    <property type="entry name" value="Elongation Factor G (Translational Gtpase), domain 3"/>
    <property type="match status" value="1"/>
</dbReference>
<dbReference type="Gene3D" id="3.40.50.300">
    <property type="entry name" value="P-loop containing nucleotide triphosphate hydrolases"/>
    <property type="match status" value="1"/>
</dbReference>
<dbReference type="Gene3D" id="2.40.30.10">
    <property type="entry name" value="Translation factors"/>
    <property type="match status" value="1"/>
</dbReference>
<dbReference type="HAMAP" id="MF_00071">
    <property type="entry name" value="LepA"/>
    <property type="match status" value="1"/>
</dbReference>
<dbReference type="InterPro" id="IPR006297">
    <property type="entry name" value="EF-4"/>
</dbReference>
<dbReference type="InterPro" id="IPR035647">
    <property type="entry name" value="EFG_III/V"/>
</dbReference>
<dbReference type="InterPro" id="IPR000640">
    <property type="entry name" value="EFG_V-like"/>
</dbReference>
<dbReference type="InterPro" id="IPR004161">
    <property type="entry name" value="EFTu-like_2"/>
</dbReference>
<dbReference type="InterPro" id="IPR031157">
    <property type="entry name" value="G_TR_CS"/>
</dbReference>
<dbReference type="InterPro" id="IPR038363">
    <property type="entry name" value="LepA_C_sf"/>
</dbReference>
<dbReference type="InterPro" id="IPR013842">
    <property type="entry name" value="LepA_CTD"/>
</dbReference>
<dbReference type="InterPro" id="IPR035654">
    <property type="entry name" value="LepA_IV"/>
</dbReference>
<dbReference type="InterPro" id="IPR027417">
    <property type="entry name" value="P-loop_NTPase"/>
</dbReference>
<dbReference type="InterPro" id="IPR005225">
    <property type="entry name" value="Small_GTP-bd"/>
</dbReference>
<dbReference type="InterPro" id="IPR000795">
    <property type="entry name" value="T_Tr_GTP-bd_dom"/>
</dbReference>
<dbReference type="NCBIfam" id="TIGR01393">
    <property type="entry name" value="lepA"/>
    <property type="match status" value="1"/>
</dbReference>
<dbReference type="NCBIfam" id="TIGR00231">
    <property type="entry name" value="small_GTP"/>
    <property type="match status" value="1"/>
</dbReference>
<dbReference type="PANTHER" id="PTHR43512:SF4">
    <property type="entry name" value="TRANSLATION FACTOR GUF1 HOMOLOG, CHLOROPLASTIC"/>
    <property type="match status" value="1"/>
</dbReference>
<dbReference type="PANTHER" id="PTHR43512">
    <property type="entry name" value="TRANSLATION FACTOR GUF1-RELATED"/>
    <property type="match status" value="1"/>
</dbReference>
<dbReference type="Pfam" id="PF00679">
    <property type="entry name" value="EFG_C"/>
    <property type="match status" value="1"/>
</dbReference>
<dbReference type="Pfam" id="PF00009">
    <property type="entry name" value="GTP_EFTU"/>
    <property type="match status" value="1"/>
</dbReference>
<dbReference type="Pfam" id="PF03144">
    <property type="entry name" value="GTP_EFTU_D2"/>
    <property type="match status" value="1"/>
</dbReference>
<dbReference type="Pfam" id="PF06421">
    <property type="entry name" value="LepA_C"/>
    <property type="match status" value="1"/>
</dbReference>
<dbReference type="PRINTS" id="PR00315">
    <property type="entry name" value="ELONGATNFCT"/>
</dbReference>
<dbReference type="SUPFAM" id="SSF54980">
    <property type="entry name" value="EF-G C-terminal domain-like"/>
    <property type="match status" value="2"/>
</dbReference>
<dbReference type="SUPFAM" id="SSF52540">
    <property type="entry name" value="P-loop containing nucleoside triphosphate hydrolases"/>
    <property type="match status" value="1"/>
</dbReference>
<dbReference type="PROSITE" id="PS00301">
    <property type="entry name" value="G_TR_1"/>
    <property type="match status" value="1"/>
</dbReference>
<dbReference type="PROSITE" id="PS51722">
    <property type="entry name" value="G_TR_2"/>
    <property type="match status" value="1"/>
</dbReference>
<accession>Q6AL53</accession>
<evidence type="ECO:0000255" key="1">
    <source>
        <dbReference type="HAMAP-Rule" id="MF_00071"/>
    </source>
</evidence>
<reference key="1">
    <citation type="journal article" date="2004" name="Environ. Microbiol.">
        <title>The genome of Desulfotalea psychrophila, a sulfate-reducing bacterium from permanently cold Arctic sediments.</title>
        <authorList>
            <person name="Rabus R."/>
            <person name="Ruepp A."/>
            <person name="Frickey T."/>
            <person name="Rattei T."/>
            <person name="Fartmann B."/>
            <person name="Stark M."/>
            <person name="Bauer M."/>
            <person name="Zibat A."/>
            <person name="Lombardot T."/>
            <person name="Becker I."/>
            <person name="Amann J."/>
            <person name="Gellner K."/>
            <person name="Teeling H."/>
            <person name="Leuschner W.D."/>
            <person name="Gloeckner F.-O."/>
            <person name="Lupas A.N."/>
            <person name="Amann R."/>
            <person name="Klenk H.-P."/>
        </authorList>
    </citation>
    <scope>NUCLEOTIDE SEQUENCE [LARGE SCALE GENOMIC DNA]</scope>
    <source>
        <strain>DSM 12343 / LSv54</strain>
    </source>
</reference>
<sequence length="597" mass="66379">MKNIRNFSIIAHIDHGKSTLADRMIQECGVITARDFQDQLLDNMDIERERGITIKSQTVCLPYTAKDGKEYILNLVDTPGHVDFSYEVSRALTSCEGALLIVDAAQGVEAQTLANLYLAMENDLEIIPVINKIDLPSAEPEKVALQIEEDLGLDADLIQLCSAKTGVGVHEILDSIVEHLPAPEGDAKAPLQALIFDANYDPFRGTIISVRLINGTVKAGDIIRFMSTGIEYKVEEVGLFKVQREARKTLSAGEVGYILAGIKTVQDTRPGETITLKANPCEAALAGFQEVQQVVFSSIYPIDTDDYEDLVVALEKLKLNDAALTFEKDSSVALGFGFRCGFLGLLHLEVVQERLEREFNISLILTVPSVKYIFTLSDGTTKEVDNPAHFPDPTHIDEVKEPFIKASILIPEKYMGAVMNLCMERRGENTTFHYPTPGRIEFICELPLAEVIYDFYDRLKSVTQGYGSFDYELIDYRKSDLVKLDILVNSEPVDALSQLVHRVNARKRGLHSCEMLKEEIPRQMFKIAIQAAIGGNVVARTNISAMRKDVTAKCYGGDISRKRKLLEKQKAGKKRMKTVGNVDIPQTAFLAVLKSEQ</sequence>
<protein>
    <recommendedName>
        <fullName evidence="1">Elongation factor 4</fullName>
        <shortName evidence="1">EF-4</shortName>
        <ecNumber evidence="1">3.6.5.n1</ecNumber>
    </recommendedName>
    <alternativeName>
        <fullName evidence="1">Ribosomal back-translocase LepA</fullName>
    </alternativeName>
</protein>
<organism>
    <name type="scientific">Desulfotalea psychrophila (strain LSv54 / DSM 12343)</name>
    <dbReference type="NCBI Taxonomy" id="177439"/>
    <lineage>
        <taxon>Bacteria</taxon>
        <taxon>Pseudomonadati</taxon>
        <taxon>Thermodesulfobacteriota</taxon>
        <taxon>Desulfobulbia</taxon>
        <taxon>Desulfobulbales</taxon>
        <taxon>Desulfocapsaceae</taxon>
        <taxon>Desulfotalea</taxon>
    </lineage>
</organism>
<feature type="chain" id="PRO_0000176269" description="Elongation factor 4">
    <location>
        <begin position="1"/>
        <end position="597"/>
    </location>
</feature>
<feature type="domain" description="tr-type G">
    <location>
        <begin position="2"/>
        <end position="184"/>
    </location>
</feature>
<feature type="binding site" evidence="1">
    <location>
        <begin position="14"/>
        <end position="19"/>
    </location>
    <ligand>
        <name>GTP</name>
        <dbReference type="ChEBI" id="CHEBI:37565"/>
    </ligand>
</feature>
<feature type="binding site" evidence="1">
    <location>
        <begin position="131"/>
        <end position="134"/>
    </location>
    <ligand>
        <name>GTP</name>
        <dbReference type="ChEBI" id="CHEBI:37565"/>
    </ligand>
</feature>
<comment type="function">
    <text evidence="1">Required for accurate and efficient protein synthesis under certain stress conditions. May act as a fidelity factor of the translation reaction, by catalyzing a one-codon backward translocation of tRNAs on improperly translocated ribosomes. Back-translocation proceeds from a post-translocation (POST) complex to a pre-translocation (PRE) complex, thus giving elongation factor G a second chance to translocate the tRNAs correctly. Binds to ribosomes in a GTP-dependent manner.</text>
</comment>
<comment type="catalytic activity">
    <reaction evidence="1">
        <text>GTP + H2O = GDP + phosphate + H(+)</text>
        <dbReference type="Rhea" id="RHEA:19669"/>
        <dbReference type="ChEBI" id="CHEBI:15377"/>
        <dbReference type="ChEBI" id="CHEBI:15378"/>
        <dbReference type="ChEBI" id="CHEBI:37565"/>
        <dbReference type="ChEBI" id="CHEBI:43474"/>
        <dbReference type="ChEBI" id="CHEBI:58189"/>
        <dbReference type="EC" id="3.6.5.n1"/>
    </reaction>
</comment>
<comment type="subcellular location">
    <subcellularLocation>
        <location evidence="1">Cell inner membrane</location>
        <topology evidence="1">Peripheral membrane protein</topology>
        <orientation evidence="1">Cytoplasmic side</orientation>
    </subcellularLocation>
</comment>
<comment type="similarity">
    <text evidence="1">Belongs to the TRAFAC class translation factor GTPase superfamily. Classic translation factor GTPase family. LepA subfamily.</text>
</comment>